<accession>C6DYS1</accession>
<name>YIDC_GEOSM</name>
<feature type="chain" id="PRO_1000215972" description="Membrane protein insertase YidC">
    <location>
        <begin position="1"/>
        <end position="536"/>
    </location>
</feature>
<feature type="transmembrane region" description="Helical" evidence="1">
    <location>
        <begin position="5"/>
        <end position="25"/>
    </location>
</feature>
<feature type="transmembrane region" description="Helical" evidence="1">
    <location>
        <begin position="353"/>
        <end position="373"/>
    </location>
</feature>
<feature type="transmembrane region" description="Helical" evidence="1">
    <location>
        <begin position="418"/>
        <end position="438"/>
    </location>
</feature>
<feature type="transmembrane region" description="Helical" evidence="1">
    <location>
        <begin position="495"/>
        <end position="515"/>
    </location>
</feature>
<organism>
    <name type="scientific">Geobacter sp. (strain M21)</name>
    <dbReference type="NCBI Taxonomy" id="443144"/>
    <lineage>
        <taxon>Bacteria</taxon>
        <taxon>Pseudomonadati</taxon>
        <taxon>Thermodesulfobacteriota</taxon>
        <taxon>Desulfuromonadia</taxon>
        <taxon>Geobacterales</taxon>
        <taxon>Geobacteraceae</taxon>
        <taxon>Geobacter</taxon>
    </lineage>
</organism>
<proteinExistence type="inferred from homology"/>
<comment type="function">
    <text evidence="1">Required for the insertion and/or proper folding and/or complex formation of integral membrane proteins into the membrane. Involved in integration of membrane proteins that insert both dependently and independently of the Sec translocase complex, as well as at least some lipoproteins. Aids folding of multispanning membrane proteins.</text>
</comment>
<comment type="subunit">
    <text evidence="1">Interacts with the Sec translocase complex via SecD. Specifically interacts with transmembrane segments of nascent integral membrane proteins during membrane integration.</text>
</comment>
<comment type="subcellular location">
    <subcellularLocation>
        <location evidence="1">Cell inner membrane</location>
        <topology evidence="1">Multi-pass membrane protein</topology>
    </subcellularLocation>
</comment>
<comment type="similarity">
    <text evidence="1">Belongs to the OXA1/ALB3/YidC family. Type 1 subfamily.</text>
</comment>
<keyword id="KW-0997">Cell inner membrane</keyword>
<keyword id="KW-1003">Cell membrane</keyword>
<keyword id="KW-0143">Chaperone</keyword>
<keyword id="KW-0472">Membrane</keyword>
<keyword id="KW-0653">Protein transport</keyword>
<keyword id="KW-0812">Transmembrane</keyword>
<keyword id="KW-1133">Transmembrane helix</keyword>
<keyword id="KW-0813">Transport</keyword>
<protein>
    <recommendedName>
        <fullName evidence="1">Membrane protein insertase YidC</fullName>
    </recommendedName>
    <alternativeName>
        <fullName evidence="1">Foldase YidC</fullName>
    </alternativeName>
    <alternativeName>
        <fullName evidence="1">Membrane integrase YidC</fullName>
    </alternativeName>
    <alternativeName>
        <fullName evidence="1">Membrane protein YidC</fullName>
    </alternativeName>
</protein>
<sequence length="536" mass="59089">MEKRLIIAVVLSIGVLYAYSFIFPTPKPVPTPGGKQAAMSSATAPAPSVAALPIAGTTPVAAPAPQAGQAPAVAKDVTVDTDLYTAVFSTQGGGLKKFVLKKYKETAGPQGKDIVLVNETAANRYALLSDSREFGISPNALYSASTGEVKVTDGGKGSLELTTTTSQGITFRKVYTFSGDAYRIGLTEEVQNVGNVALTGAVHLLQTSRVVDAKKEGRYEVYSPSTLAEGKVKLDDLEDLQKTPVQYGKDIAWSAFADKYFVDGIIADKGSISQVRITRPANDAILRDVASPTVSVAPGQRSAINYAIYYGPKDLDILKLQGSRFEEVIDYGWFGPIAKPLIYSLKFLYKYTGNYGIAIIIITFILKLVFFPLTHKSYKSMKDMQKLQPKMTELKEKFKNDRDAMNRAVMELYKTHKVNPLGGCLPMLVQIPVFFGLYRALMYSIELRHAPFYLWITDLSAKDPYYVTPIIMGATMFIQQKMTPTNMDPVQAKMMLMLPIVFTFMFLNFPSGLVIYWLVNNVLTIAQQMYINKTVE</sequence>
<evidence type="ECO:0000255" key="1">
    <source>
        <dbReference type="HAMAP-Rule" id="MF_01810"/>
    </source>
</evidence>
<reference key="1">
    <citation type="submission" date="2009-07" db="EMBL/GenBank/DDBJ databases">
        <title>Complete sequence of Geobacter sp. M21.</title>
        <authorList>
            <consortium name="US DOE Joint Genome Institute"/>
            <person name="Lucas S."/>
            <person name="Copeland A."/>
            <person name="Lapidus A."/>
            <person name="Glavina del Rio T."/>
            <person name="Dalin E."/>
            <person name="Tice H."/>
            <person name="Bruce D."/>
            <person name="Goodwin L."/>
            <person name="Pitluck S."/>
            <person name="Saunders E."/>
            <person name="Brettin T."/>
            <person name="Detter J.C."/>
            <person name="Han C."/>
            <person name="Larimer F."/>
            <person name="Land M."/>
            <person name="Hauser L."/>
            <person name="Kyrpides N."/>
            <person name="Ovchinnikova G."/>
            <person name="Lovley D."/>
        </authorList>
    </citation>
    <scope>NUCLEOTIDE SEQUENCE [LARGE SCALE GENOMIC DNA]</scope>
    <source>
        <strain>M21</strain>
    </source>
</reference>
<gene>
    <name evidence="1" type="primary">yidC</name>
    <name type="ordered locus">GM21_4149</name>
</gene>
<dbReference type="EMBL" id="CP001661">
    <property type="protein sequence ID" value="ACT20164.1"/>
    <property type="molecule type" value="Genomic_DNA"/>
</dbReference>
<dbReference type="SMR" id="C6DYS1"/>
<dbReference type="STRING" id="443144.GM21_4149"/>
<dbReference type="KEGG" id="gem:GM21_4149"/>
<dbReference type="eggNOG" id="COG0706">
    <property type="taxonomic scope" value="Bacteria"/>
</dbReference>
<dbReference type="HOGENOM" id="CLU_016535_3_0_7"/>
<dbReference type="OrthoDB" id="9780552at2"/>
<dbReference type="GO" id="GO:0005886">
    <property type="term" value="C:plasma membrane"/>
    <property type="evidence" value="ECO:0007669"/>
    <property type="project" value="UniProtKB-SubCell"/>
</dbReference>
<dbReference type="GO" id="GO:0032977">
    <property type="term" value="F:membrane insertase activity"/>
    <property type="evidence" value="ECO:0007669"/>
    <property type="project" value="InterPro"/>
</dbReference>
<dbReference type="GO" id="GO:0051205">
    <property type="term" value="P:protein insertion into membrane"/>
    <property type="evidence" value="ECO:0007669"/>
    <property type="project" value="TreeGrafter"/>
</dbReference>
<dbReference type="GO" id="GO:0015031">
    <property type="term" value="P:protein transport"/>
    <property type="evidence" value="ECO:0007669"/>
    <property type="project" value="UniProtKB-KW"/>
</dbReference>
<dbReference type="CDD" id="cd20070">
    <property type="entry name" value="5TM_YidC_Alb3"/>
    <property type="match status" value="1"/>
</dbReference>
<dbReference type="CDD" id="cd19961">
    <property type="entry name" value="EcYidC-like_peri"/>
    <property type="match status" value="1"/>
</dbReference>
<dbReference type="Gene3D" id="2.70.98.90">
    <property type="match status" value="1"/>
</dbReference>
<dbReference type="HAMAP" id="MF_01810">
    <property type="entry name" value="YidC_type1"/>
    <property type="match status" value="1"/>
</dbReference>
<dbReference type="InterPro" id="IPR019998">
    <property type="entry name" value="Membr_insert_YidC"/>
</dbReference>
<dbReference type="InterPro" id="IPR028053">
    <property type="entry name" value="Membr_insert_YidC_N"/>
</dbReference>
<dbReference type="InterPro" id="IPR001708">
    <property type="entry name" value="YidC/ALB3/OXA1/COX18"/>
</dbReference>
<dbReference type="InterPro" id="IPR028055">
    <property type="entry name" value="YidC/Oxa/ALB_C"/>
</dbReference>
<dbReference type="InterPro" id="IPR047196">
    <property type="entry name" value="YidC_ALB_C"/>
</dbReference>
<dbReference type="InterPro" id="IPR038221">
    <property type="entry name" value="YidC_periplasmic_sf"/>
</dbReference>
<dbReference type="NCBIfam" id="NF002352">
    <property type="entry name" value="PRK01318.1-3"/>
    <property type="match status" value="1"/>
</dbReference>
<dbReference type="NCBIfam" id="TIGR03593">
    <property type="entry name" value="yidC_nterm"/>
    <property type="match status" value="1"/>
</dbReference>
<dbReference type="NCBIfam" id="TIGR03592">
    <property type="entry name" value="yidC_oxa1_cterm"/>
    <property type="match status" value="1"/>
</dbReference>
<dbReference type="PANTHER" id="PTHR12428:SF65">
    <property type="entry name" value="CYTOCHROME C OXIDASE ASSEMBLY PROTEIN COX18, MITOCHONDRIAL"/>
    <property type="match status" value="1"/>
</dbReference>
<dbReference type="PANTHER" id="PTHR12428">
    <property type="entry name" value="OXA1"/>
    <property type="match status" value="1"/>
</dbReference>
<dbReference type="Pfam" id="PF02096">
    <property type="entry name" value="60KD_IMP"/>
    <property type="match status" value="1"/>
</dbReference>
<dbReference type="Pfam" id="PF14849">
    <property type="entry name" value="YidC_periplas"/>
    <property type="match status" value="1"/>
</dbReference>
<dbReference type="PRINTS" id="PR00701">
    <property type="entry name" value="60KDINNERMP"/>
</dbReference>
<dbReference type="PRINTS" id="PR01900">
    <property type="entry name" value="YIDCPROTEIN"/>
</dbReference>